<reference key="1">
    <citation type="journal article" date="2009" name="Nature">
        <title>The Sorghum bicolor genome and the diversification of grasses.</title>
        <authorList>
            <person name="Paterson A.H."/>
            <person name="Bowers J.E."/>
            <person name="Bruggmann R."/>
            <person name="Dubchak I."/>
            <person name="Grimwood J."/>
            <person name="Gundlach H."/>
            <person name="Haberer G."/>
            <person name="Hellsten U."/>
            <person name="Mitros T."/>
            <person name="Poliakov A."/>
            <person name="Schmutz J."/>
            <person name="Spannagl M."/>
            <person name="Tang H."/>
            <person name="Wang X."/>
            <person name="Wicker T."/>
            <person name="Bharti A.K."/>
            <person name="Chapman J."/>
            <person name="Feltus F.A."/>
            <person name="Gowik U."/>
            <person name="Grigoriev I.V."/>
            <person name="Lyons E."/>
            <person name="Maher C.A."/>
            <person name="Martis M."/>
            <person name="Narechania A."/>
            <person name="Otillar R.P."/>
            <person name="Penning B.W."/>
            <person name="Salamov A.A."/>
            <person name="Wang Y."/>
            <person name="Zhang L."/>
            <person name="Carpita N.C."/>
            <person name="Freeling M."/>
            <person name="Gingle A.R."/>
            <person name="Hash C.T."/>
            <person name="Keller B."/>
            <person name="Klein P."/>
            <person name="Kresovich S."/>
            <person name="McCann M.C."/>
            <person name="Ming R."/>
            <person name="Peterson D.G."/>
            <person name="Mehboob-ur-Rahman M."/>
            <person name="Ware D."/>
            <person name="Westhoff P."/>
            <person name="Mayer K.F.X."/>
            <person name="Messing J."/>
            <person name="Rokhsar D.S."/>
        </authorList>
    </citation>
    <scope>NUCLEOTIDE SEQUENCE [LARGE SCALE GENOMIC DNA]</scope>
    <source>
        <strain>cv. BTx623</strain>
    </source>
</reference>
<reference key="2">
    <citation type="journal article" date="2018" name="Plant J.">
        <title>The Sorghum bicolor reference genome: improved assembly, gene annotations, a transcriptome atlas, and signatures of genome organization.</title>
        <authorList>
            <person name="McCormick R.F."/>
            <person name="Truong S.K."/>
            <person name="Sreedasyam A."/>
            <person name="Jenkins J."/>
            <person name="Shu S."/>
            <person name="Sims D."/>
            <person name="Kennedy M."/>
            <person name="Amirebrahimi M."/>
            <person name="Weers B.D."/>
            <person name="McKinley B."/>
            <person name="Mattison A."/>
            <person name="Morishige D.T."/>
            <person name="Grimwood J."/>
            <person name="Schmutz J."/>
            <person name="Mullet J.E."/>
        </authorList>
    </citation>
    <scope>GENOME REANNOTATION</scope>
    <source>
        <strain>cv. BTx623</strain>
    </source>
</reference>
<reference key="3">
    <citation type="journal article" date="2014" name="Plant Physiol.">
        <title>Functional and evolutionary analysis of the CASPARIAN STRIP MEMBRANE DOMAIN PROTEIN family.</title>
        <authorList>
            <person name="Roppolo D."/>
            <person name="Boeckmann B."/>
            <person name="Pfister A."/>
            <person name="Boutet E."/>
            <person name="Rubio M.C."/>
            <person name="Denervaud-Tendon V."/>
            <person name="Vermeer J.E."/>
            <person name="Gheyselinck J."/>
            <person name="Xenarios I."/>
            <person name="Geldner N."/>
        </authorList>
    </citation>
    <scope>GENE FAMILY</scope>
    <scope>NOMENCLATURE</scope>
</reference>
<sequence>MTMELESQEVVVETTTAAAAARAASAAHVRTTVALRLLAFAASLAAAVVVATNRQERWGITVTFKMFAVWEAFVAINFACAAYALLTAVFVKKLVSKHWLHHMDQFTVNLQAASTAGAGAVGSVAMWGNEPSGWYAVCRLYRLYCDRGAVSLALAFVAFVAFGVASSLSRYPRAPPPPAPR</sequence>
<proteinExistence type="evidence at transcript level"/>
<dbReference type="EMBL" id="CM000766">
    <property type="protein sequence ID" value="EES15294.1"/>
    <property type="molecule type" value="Genomic_DNA"/>
</dbReference>
<dbReference type="FunCoup" id="C5YHP6">
    <property type="interactions" value="556"/>
</dbReference>
<dbReference type="STRING" id="4558.C5YHP6"/>
<dbReference type="EnsemblPlants" id="EES15294">
    <property type="protein sequence ID" value="EES15294"/>
    <property type="gene ID" value="SORBI_3007G189900"/>
</dbReference>
<dbReference type="Gramene" id="EES15294">
    <property type="protein sequence ID" value="EES15294"/>
    <property type="gene ID" value="SORBI_3007G189900"/>
</dbReference>
<dbReference type="KEGG" id="sbi:8060934"/>
<dbReference type="eggNOG" id="ENOG502R3EV">
    <property type="taxonomic scope" value="Eukaryota"/>
</dbReference>
<dbReference type="HOGENOM" id="CLU_1491594_0_0_1"/>
<dbReference type="InParanoid" id="C5YHP6"/>
<dbReference type="OMA" id="GWFAVCR"/>
<dbReference type="OrthoDB" id="677395at2759"/>
<dbReference type="Proteomes" id="UP000000768">
    <property type="component" value="Chromosome 7"/>
</dbReference>
<dbReference type="GO" id="GO:0005886">
    <property type="term" value="C:plasma membrane"/>
    <property type="evidence" value="ECO:0007669"/>
    <property type="project" value="UniProtKB-SubCell"/>
</dbReference>
<dbReference type="InterPro" id="IPR006459">
    <property type="entry name" value="CASP/CASPL"/>
</dbReference>
<dbReference type="InterPro" id="IPR006702">
    <property type="entry name" value="CASP_dom"/>
</dbReference>
<dbReference type="NCBIfam" id="TIGR01569">
    <property type="entry name" value="A_tha_TIGR01569"/>
    <property type="match status" value="1"/>
</dbReference>
<dbReference type="PANTHER" id="PTHR33573">
    <property type="entry name" value="CASP-LIKE PROTEIN 4A4"/>
    <property type="match status" value="1"/>
</dbReference>
<dbReference type="PANTHER" id="PTHR33573:SF49">
    <property type="entry name" value="CASP-LIKE PROTEIN UU-1"/>
    <property type="match status" value="1"/>
</dbReference>
<dbReference type="Pfam" id="PF04535">
    <property type="entry name" value="CASP_dom"/>
    <property type="match status" value="1"/>
</dbReference>
<comment type="subunit">
    <text evidence="1">Homodimer and heterodimers.</text>
</comment>
<comment type="subcellular location">
    <subcellularLocation>
        <location evidence="1">Cell membrane</location>
        <topology evidence="1">Multi-pass membrane protein</topology>
    </subcellularLocation>
</comment>
<comment type="similarity">
    <text evidence="3">Belongs to the Casparian strip membrane proteins (CASP) family.</text>
</comment>
<accession>C5YHP6</accession>
<organism>
    <name type="scientific">Sorghum bicolor</name>
    <name type="common">Sorghum</name>
    <name type="synonym">Sorghum vulgare</name>
    <dbReference type="NCBI Taxonomy" id="4558"/>
    <lineage>
        <taxon>Eukaryota</taxon>
        <taxon>Viridiplantae</taxon>
        <taxon>Streptophyta</taxon>
        <taxon>Embryophyta</taxon>
        <taxon>Tracheophyta</taxon>
        <taxon>Spermatophyta</taxon>
        <taxon>Magnoliopsida</taxon>
        <taxon>Liliopsida</taxon>
        <taxon>Poales</taxon>
        <taxon>Poaceae</taxon>
        <taxon>PACMAD clade</taxon>
        <taxon>Panicoideae</taxon>
        <taxon>Andropogonodae</taxon>
        <taxon>Andropogoneae</taxon>
        <taxon>Sorghinae</taxon>
        <taxon>Sorghum</taxon>
    </lineage>
</organism>
<protein>
    <recommendedName>
        <fullName>CASP-like protein UU-1</fullName>
        <shortName>SbCASPLUU-1</shortName>
    </recommendedName>
</protein>
<evidence type="ECO:0000250" key="1"/>
<evidence type="ECO:0000255" key="2"/>
<evidence type="ECO:0000305" key="3"/>
<name>CSPL1_SORBI</name>
<gene>
    <name type="ordered locus">Sb07g025950</name>
</gene>
<keyword id="KW-1003">Cell membrane</keyword>
<keyword id="KW-0472">Membrane</keyword>
<keyword id="KW-1185">Reference proteome</keyword>
<keyword id="KW-0812">Transmembrane</keyword>
<keyword id="KW-1133">Transmembrane helix</keyword>
<feature type="chain" id="PRO_0000391584" description="CASP-like protein UU-1">
    <location>
        <begin position="1"/>
        <end position="181"/>
    </location>
</feature>
<feature type="topological domain" description="Cytoplasmic" evidence="2">
    <location>
        <begin position="1"/>
        <end position="30"/>
    </location>
</feature>
<feature type="transmembrane region" description="Helical" evidence="2">
    <location>
        <begin position="31"/>
        <end position="51"/>
    </location>
</feature>
<feature type="topological domain" description="Extracellular" evidence="2">
    <location>
        <begin position="52"/>
        <end position="65"/>
    </location>
</feature>
<feature type="transmembrane region" description="Helical" evidence="2">
    <location>
        <begin position="66"/>
        <end position="86"/>
    </location>
</feature>
<feature type="topological domain" description="Cytoplasmic" evidence="2">
    <location>
        <begin position="87"/>
        <end position="107"/>
    </location>
</feature>
<feature type="transmembrane region" description="Helical" evidence="2">
    <location>
        <begin position="108"/>
        <end position="128"/>
    </location>
</feature>
<feature type="topological domain" description="Extracellular" evidence="2">
    <location>
        <begin position="129"/>
        <end position="147"/>
    </location>
</feature>
<feature type="transmembrane region" description="Helical" evidence="2">
    <location>
        <begin position="148"/>
        <end position="168"/>
    </location>
</feature>
<feature type="topological domain" description="Cytoplasmic" evidence="2">
    <location>
        <begin position="169"/>
        <end position="181"/>
    </location>
</feature>